<accession>Q5QYG1</accession>
<dbReference type="EC" id="4.1.1.98" evidence="1"/>
<dbReference type="EMBL" id="AE017340">
    <property type="protein sequence ID" value="AAV83192.1"/>
    <property type="molecule type" value="Genomic_DNA"/>
</dbReference>
<dbReference type="RefSeq" id="WP_011235586.1">
    <property type="nucleotide sequence ID" value="NC_006512.1"/>
</dbReference>
<dbReference type="SMR" id="Q5QYG1"/>
<dbReference type="STRING" id="283942.IL2360"/>
<dbReference type="GeneID" id="41337555"/>
<dbReference type="KEGG" id="ilo:IL2360"/>
<dbReference type="eggNOG" id="COG0043">
    <property type="taxonomic scope" value="Bacteria"/>
</dbReference>
<dbReference type="HOGENOM" id="CLU_023348_4_1_6"/>
<dbReference type="OrthoDB" id="9809841at2"/>
<dbReference type="UniPathway" id="UPA00232"/>
<dbReference type="Proteomes" id="UP000001171">
    <property type="component" value="Chromosome"/>
</dbReference>
<dbReference type="GO" id="GO:0005829">
    <property type="term" value="C:cytosol"/>
    <property type="evidence" value="ECO:0007669"/>
    <property type="project" value="TreeGrafter"/>
</dbReference>
<dbReference type="GO" id="GO:0005886">
    <property type="term" value="C:plasma membrane"/>
    <property type="evidence" value="ECO:0007669"/>
    <property type="project" value="UniProtKB-SubCell"/>
</dbReference>
<dbReference type="GO" id="GO:0008694">
    <property type="term" value="F:3-octaprenyl-4-hydroxybenzoate carboxy-lyase activity"/>
    <property type="evidence" value="ECO:0007669"/>
    <property type="project" value="UniProtKB-UniRule"/>
</dbReference>
<dbReference type="GO" id="GO:0046872">
    <property type="term" value="F:metal ion binding"/>
    <property type="evidence" value="ECO:0007669"/>
    <property type="project" value="UniProtKB-KW"/>
</dbReference>
<dbReference type="GO" id="GO:0006744">
    <property type="term" value="P:ubiquinone biosynthetic process"/>
    <property type="evidence" value="ECO:0007669"/>
    <property type="project" value="UniProtKB-UniRule"/>
</dbReference>
<dbReference type="FunFam" id="1.20.5.570:FF:000001">
    <property type="entry name" value="3-octaprenyl-4-hydroxybenzoate carboxy-lyase"/>
    <property type="match status" value="1"/>
</dbReference>
<dbReference type="FunFam" id="3.40.1670.10:FF:000001">
    <property type="entry name" value="3-octaprenyl-4-hydroxybenzoate carboxy-lyase"/>
    <property type="match status" value="1"/>
</dbReference>
<dbReference type="Gene3D" id="1.20.5.570">
    <property type="entry name" value="Single helix bin"/>
    <property type="match status" value="1"/>
</dbReference>
<dbReference type="Gene3D" id="3.40.1670.10">
    <property type="entry name" value="UbiD C-terminal domain-like"/>
    <property type="match status" value="1"/>
</dbReference>
<dbReference type="HAMAP" id="MF_01636">
    <property type="entry name" value="UbiD"/>
    <property type="match status" value="1"/>
</dbReference>
<dbReference type="InterPro" id="IPR002830">
    <property type="entry name" value="UbiD"/>
</dbReference>
<dbReference type="InterPro" id="IPR049381">
    <property type="entry name" value="UbiD-like_C"/>
</dbReference>
<dbReference type="InterPro" id="IPR049383">
    <property type="entry name" value="UbiD-like_N"/>
</dbReference>
<dbReference type="InterPro" id="IPR023677">
    <property type="entry name" value="UbiD_bacteria"/>
</dbReference>
<dbReference type="InterPro" id="IPR048304">
    <property type="entry name" value="UbiD_Rift_dom"/>
</dbReference>
<dbReference type="NCBIfam" id="NF008175">
    <property type="entry name" value="PRK10922.1"/>
    <property type="match status" value="1"/>
</dbReference>
<dbReference type="NCBIfam" id="TIGR00148">
    <property type="entry name" value="UbiD family decarboxylase"/>
    <property type="match status" value="1"/>
</dbReference>
<dbReference type="PANTHER" id="PTHR30108">
    <property type="entry name" value="3-OCTAPRENYL-4-HYDROXYBENZOATE CARBOXY-LYASE-RELATED"/>
    <property type="match status" value="1"/>
</dbReference>
<dbReference type="PANTHER" id="PTHR30108:SF17">
    <property type="entry name" value="FERULIC ACID DECARBOXYLASE 1"/>
    <property type="match status" value="1"/>
</dbReference>
<dbReference type="Pfam" id="PF01977">
    <property type="entry name" value="UbiD"/>
    <property type="match status" value="1"/>
</dbReference>
<dbReference type="Pfam" id="PF20696">
    <property type="entry name" value="UbiD_C"/>
    <property type="match status" value="1"/>
</dbReference>
<dbReference type="Pfam" id="PF20695">
    <property type="entry name" value="UbiD_N"/>
    <property type="match status" value="1"/>
</dbReference>
<dbReference type="SUPFAM" id="SSF50475">
    <property type="entry name" value="FMN-binding split barrel"/>
    <property type="match status" value="1"/>
</dbReference>
<dbReference type="SUPFAM" id="SSF143968">
    <property type="entry name" value="UbiD C-terminal domain-like"/>
    <property type="match status" value="1"/>
</dbReference>
<keyword id="KW-1003">Cell membrane</keyword>
<keyword id="KW-0210">Decarboxylase</keyword>
<keyword id="KW-0285">Flavoprotein</keyword>
<keyword id="KW-0288">FMN</keyword>
<keyword id="KW-0456">Lyase</keyword>
<keyword id="KW-0464">Manganese</keyword>
<keyword id="KW-0472">Membrane</keyword>
<keyword id="KW-0479">Metal-binding</keyword>
<keyword id="KW-1185">Reference proteome</keyword>
<keyword id="KW-0831">Ubiquinone biosynthesis</keyword>
<proteinExistence type="inferred from homology"/>
<evidence type="ECO:0000255" key="1">
    <source>
        <dbReference type="HAMAP-Rule" id="MF_01636"/>
    </source>
</evidence>
<comment type="function">
    <text evidence="1">Catalyzes the decarboxylation of 3-octaprenyl-4-hydroxy benzoate to 2-octaprenylphenol, an intermediate step in ubiquinone biosynthesis.</text>
</comment>
<comment type="catalytic activity">
    <reaction evidence="1">
        <text>a 4-hydroxy-3-(all-trans-polyprenyl)benzoate + H(+) = a 2-(all-trans-polyprenyl)phenol + CO2</text>
        <dbReference type="Rhea" id="RHEA:41680"/>
        <dbReference type="Rhea" id="RHEA-COMP:9514"/>
        <dbReference type="Rhea" id="RHEA-COMP:9516"/>
        <dbReference type="ChEBI" id="CHEBI:1269"/>
        <dbReference type="ChEBI" id="CHEBI:15378"/>
        <dbReference type="ChEBI" id="CHEBI:16526"/>
        <dbReference type="ChEBI" id="CHEBI:78396"/>
        <dbReference type="EC" id="4.1.1.98"/>
    </reaction>
</comment>
<comment type="cofactor">
    <cofactor evidence="1">
        <name>prenylated FMN</name>
        <dbReference type="ChEBI" id="CHEBI:87746"/>
    </cofactor>
    <text evidence="1">Binds 1 prenylated FMN per subunit.</text>
</comment>
<comment type="cofactor">
    <cofactor evidence="1">
        <name>Mn(2+)</name>
        <dbReference type="ChEBI" id="CHEBI:29035"/>
    </cofactor>
</comment>
<comment type="pathway">
    <text evidence="1">Cofactor biosynthesis; ubiquinone biosynthesis.</text>
</comment>
<comment type="subunit">
    <text evidence="1">Homohexamer.</text>
</comment>
<comment type="subcellular location">
    <subcellularLocation>
        <location evidence="1">Cell membrane</location>
        <topology evidence="1">Peripheral membrane protein</topology>
    </subcellularLocation>
</comment>
<comment type="similarity">
    <text evidence="1">Belongs to the UbiD family.</text>
</comment>
<name>UBID_IDILO</name>
<sequence length="490" mass="55231">MKYQDLRDFIALLEERGELKRIQQEIDPYLEITEISDRTLKAQGPALLFENVKGHDMPVLANLFGTPDRVALGMGQESVTALRDVGKLLAFLKEPEPPKGFRDALNLLPKYKKVLSMSPKSIKKAPCQQVVMSGDDVDLTKLPIQHCWPGDVAPLVTWGLTVTRGPHKERQNLGIYRQQLLGPNKLIMRWLSHRGGALDFQEWCQQHPGERFPVSVALGADPATILGAVTPVPDSLSEYAFAGLLRDSKTEVTQCLSNDLQVPAHAEIILEGYIEPGEMAAEGPYGDHTGYYNEVDEFPVFTVTHVTHRKDPIYHSTYTGRPPDEPAVLGVALNEVFIPLLQKQFPEIVDFYLPPEGCSYRLAVVTMKKQYPGHAKRVMMGVWSFLRQFMYTKFVIVCDDDVNARDWKDVIWAMTTRMDPARDTTLVENTPIDYLDFASPVSGLGSKMGMDATNKWPGETDREWGEPIVMSDEVKQRVDELWDELNIMES</sequence>
<feature type="chain" id="PRO_0000267668" description="3-octaprenyl-4-hydroxybenzoate carboxy-lyase">
    <location>
        <begin position="1"/>
        <end position="490"/>
    </location>
</feature>
<feature type="active site" description="Proton donor" evidence="1">
    <location>
        <position position="287"/>
    </location>
</feature>
<feature type="binding site" evidence="1">
    <location>
        <position position="172"/>
    </location>
    <ligand>
        <name>Mn(2+)</name>
        <dbReference type="ChEBI" id="CHEBI:29035"/>
    </ligand>
</feature>
<feature type="binding site" evidence="1">
    <location>
        <begin position="175"/>
        <end position="177"/>
    </location>
    <ligand>
        <name>prenylated FMN</name>
        <dbReference type="ChEBI" id="CHEBI:87746"/>
    </ligand>
</feature>
<feature type="binding site" evidence="1">
    <location>
        <begin position="189"/>
        <end position="191"/>
    </location>
    <ligand>
        <name>prenylated FMN</name>
        <dbReference type="ChEBI" id="CHEBI:87746"/>
    </ligand>
</feature>
<feature type="binding site" evidence="1">
    <location>
        <begin position="194"/>
        <end position="195"/>
    </location>
    <ligand>
        <name>prenylated FMN</name>
        <dbReference type="ChEBI" id="CHEBI:87746"/>
    </ligand>
</feature>
<feature type="binding site" evidence="1">
    <location>
        <position position="238"/>
    </location>
    <ligand>
        <name>Mn(2+)</name>
        <dbReference type="ChEBI" id="CHEBI:29035"/>
    </ligand>
</feature>
<organism>
    <name type="scientific">Idiomarina loihiensis (strain ATCC BAA-735 / DSM 15497 / L2-TR)</name>
    <dbReference type="NCBI Taxonomy" id="283942"/>
    <lineage>
        <taxon>Bacteria</taxon>
        <taxon>Pseudomonadati</taxon>
        <taxon>Pseudomonadota</taxon>
        <taxon>Gammaproteobacteria</taxon>
        <taxon>Alteromonadales</taxon>
        <taxon>Idiomarinaceae</taxon>
        <taxon>Idiomarina</taxon>
    </lineage>
</organism>
<reference key="1">
    <citation type="journal article" date="2004" name="Proc. Natl. Acad. Sci. U.S.A.">
        <title>Genome sequence of the deep-sea gamma-proteobacterium Idiomarina loihiensis reveals amino acid fermentation as a source of carbon and energy.</title>
        <authorList>
            <person name="Hou S."/>
            <person name="Saw J.H."/>
            <person name="Lee K.S."/>
            <person name="Freitas T.A."/>
            <person name="Belisle C."/>
            <person name="Kawarabayasi Y."/>
            <person name="Donachie S.P."/>
            <person name="Pikina A."/>
            <person name="Galperin M.Y."/>
            <person name="Koonin E.V."/>
            <person name="Makarova K.S."/>
            <person name="Omelchenko M.V."/>
            <person name="Sorokin A."/>
            <person name="Wolf Y.I."/>
            <person name="Li Q.X."/>
            <person name="Keum Y.S."/>
            <person name="Campbell S."/>
            <person name="Denery J."/>
            <person name="Aizawa S."/>
            <person name="Shibata S."/>
            <person name="Malahoff A."/>
            <person name="Alam M."/>
        </authorList>
    </citation>
    <scope>NUCLEOTIDE SEQUENCE [LARGE SCALE GENOMIC DNA]</scope>
    <source>
        <strain>ATCC BAA-735 / DSM 15497 / L2-TR</strain>
    </source>
</reference>
<protein>
    <recommendedName>
        <fullName evidence="1">3-octaprenyl-4-hydroxybenzoate carboxy-lyase</fullName>
        <ecNumber evidence="1">4.1.1.98</ecNumber>
    </recommendedName>
    <alternativeName>
        <fullName evidence="1">Polyprenyl p-hydroxybenzoate decarboxylase</fullName>
    </alternativeName>
</protein>
<gene>
    <name evidence="1" type="primary">ubiD</name>
    <name type="ordered locus">IL2360</name>
</gene>